<feature type="chain" id="PRO_0000452014" description="Chorismate mutase">
    <location>
        <begin position="1"/>
        <end position="266"/>
    </location>
</feature>
<feature type="domain" description="Chorismate mutase" evidence="2">
    <location>
        <begin position="7"/>
        <end position="263"/>
    </location>
</feature>
<feature type="binding site" evidence="1">
    <location>
        <position position="77"/>
    </location>
    <ligand>
        <name>L-tyrosine</name>
        <dbReference type="ChEBI" id="CHEBI:58315"/>
        <note>allosteric effector</note>
    </ligand>
</feature>
<feature type="binding site" evidence="1">
    <location>
        <position position="78"/>
    </location>
    <ligand>
        <name>L-tyrosine</name>
        <dbReference type="ChEBI" id="CHEBI:58315"/>
        <note>allosteric effector</note>
    </ligand>
</feature>
<feature type="binding site" evidence="1">
    <location>
        <position position="144"/>
    </location>
    <ligand>
        <name>L-tryptophan</name>
        <dbReference type="ChEBI" id="CHEBI:57912"/>
        <note>allosteric effector</note>
    </ligand>
</feature>
<feature type="binding site" evidence="1">
    <location>
        <position position="144"/>
    </location>
    <ligand>
        <name>L-tyrosine</name>
        <dbReference type="ChEBI" id="CHEBI:58315"/>
        <note>allosteric effector</note>
    </ligand>
</feature>
<feature type="binding site" evidence="1">
    <location>
        <position position="146"/>
    </location>
    <ligand>
        <name>L-tryptophan</name>
        <dbReference type="ChEBI" id="CHEBI:57912"/>
        <note>allosteric effector</note>
    </ligand>
</feature>
<feature type="binding site" evidence="1">
    <location>
        <position position="146"/>
    </location>
    <ligand>
        <name>L-tyrosine</name>
        <dbReference type="ChEBI" id="CHEBI:58315"/>
        <note>allosteric effector</note>
    </ligand>
</feature>
<feature type="binding site" evidence="1">
    <location>
        <position position="147"/>
    </location>
    <ligand>
        <name>L-tryptophan</name>
        <dbReference type="ChEBI" id="CHEBI:57912"/>
        <note>allosteric effector</note>
    </ligand>
</feature>
<feature type="binding site" evidence="1">
    <location>
        <position position="147"/>
    </location>
    <ligand>
        <name>L-tyrosine</name>
        <dbReference type="ChEBI" id="CHEBI:58315"/>
        <note>allosteric effector</note>
    </ligand>
</feature>
<feature type="binding site" evidence="1">
    <location>
        <position position="150"/>
    </location>
    <ligand>
        <name>L-tyrosine</name>
        <dbReference type="ChEBI" id="CHEBI:58315"/>
        <note>allosteric effector</note>
    </ligand>
</feature>
<dbReference type="EC" id="5.4.99.5" evidence="7"/>
<dbReference type="EMBL" id="KT240045">
    <property type="protein sequence ID" value="ALF39595.1"/>
    <property type="molecule type" value="Genomic_DNA"/>
</dbReference>
<dbReference type="EMBL" id="LFMI01000387">
    <property type="protein sequence ID" value="OTA03187.1"/>
    <property type="molecule type" value="Genomic_DNA"/>
</dbReference>
<dbReference type="SMR" id="A0A0S0FTT9"/>
<dbReference type="OrthoDB" id="2705at5129"/>
<dbReference type="BRENDA" id="5.4.99.5">
    <property type="organism ID" value="16178"/>
</dbReference>
<dbReference type="UniPathway" id="UPA00120">
    <property type="reaction ID" value="UER00203"/>
</dbReference>
<dbReference type="Proteomes" id="UP000219286">
    <property type="component" value="Unassembled WGS sequence"/>
</dbReference>
<dbReference type="GO" id="GO:0005737">
    <property type="term" value="C:cytoplasm"/>
    <property type="evidence" value="ECO:0000266"/>
    <property type="project" value="UniProtKB"/>
</dbReference>
<dbReference type="GO" id="GO:0004106">
    <property type="term" value="F:chorismate mutase activity"/>
    <property type="evidence" value="ECO:0000315"/>
    <property type="project" value="UniProtKB"/>
</dbReference>
<dbReference type="GO" id="GO:0046417">
    <property type="term" value="P:chorismate metabolic process"/>
    <property type="evidence" value="ECO:0000315"/>
    <property type="project" value="UniProtKB"/>
</dbReference>
<dbReference type="GO" id="GO:0009094">
    <property type="term" value="P:L-phenylalanine biosynthetic process"/>
    <property type="evidence" value="ECO:0000305"/>
    <property type="project" value="UniProtKB"/>
</dbReference>
<dbReference type="GO" id="GO:0006571">
    <property type="term" value="P:tyrosine biosynthetic process"/>
    <property type="evidence" value="ECO:0000305"/>
    <property type="project" value="UniProtKB"/>
</dbReference>
<dbReference type="FunFam" id="1.10.590.10:FF:000002">
    <property type="entry name" value="Chorismate mutase"/>
    <property type="match status" value="1"/>
</dbReference>
<dbReference type="Gene3D" id="1.10.590.10">
    <property type="entry name" value="Chorismate mutase, AroQ class superfamily, eukaryotic"/>
    <property type="match status" value="1"/>
</dbReference>
<dbReference type="InterPro" id="IPR036263">
    <property type="entry name" value="Chorismate_II_sf"/>
</dbReference>
<dbReference type="InterPro" id="IPR008238">
    <property type="entry name" value="Chorismate_mutase_AroQ_euk"/>
</dbReference>
<dbReference type="InterPro" id="IPR037039">
    <property type="entry name" value="CM_AroQ_sf_eucaryotic"/>
</dbReference>
<dbReference type="InterPro" id="IPR002701">
    <property type="entry name" value="CM_II_prokaryot"/>
</dbReference>
<dbReference type="NCBIfam" id="TIGR01802">
    <property type="entry name" value="CM_pl-yst"/>
    <property type="match status" value="1"/>
</dbReference>
<dbReference type="PANTHER" id="PTHR21145">
    <property type="entry name" value="CHORISMATE MUTASE"/>
    <property type="match status" value="1"/>
</dbReference>
<dbReference type="PANTHER" id="PTHR21145:SF12">
    <property type="entry name" value="CHORISMATE MUTASE"/>
    <property type="match status" value="1"/>
</dbReference>
<dbReference type="Pfam" id="PF01817">
    <property type="entry name" value="CM_2"/>
    <property type="match status" value="1"/>
</dbReference>
<dbReference type="PIRSF" id="PIRSF017318">
    <property type="entry name" value="Chor_mut_AroQ_eu"/>
    <property type="match status" value="1"/>
</dbReference>
<dbReference type="SUPFAM" id="SSF48600">
    <property type="entry name" value="Chorismate mutase II"/>
    <property type="match status" value="1"/>
</dbReference>
<dbReference type="PROSITE" id="PS51169">
    <property type="entry name" value="CHORISMATE_MUT_3"/>
    <property type="match status" value="1"/>
</dbReference>
<evidence type="ECO:0000250" key="1">
    <source>
        <dbReference type="UniProtKB" id="P32178"/>
    </source>
</evidence>
<evidence type="ECO:0000255" key="2">
    <source>
        <dbReference type="PROSITE-ProRule" id="PRU00516"/>
    </source>
</evidence>
<evidence type="ECO:0000269" key="3">
    <source>
    </source>
</evidence>
<evidence type="ECO:0000269" key="4">
    <source>
    </source>
</evidence>
<evidence type="ECO:0000303" key="5">
    <source>
    </source>
</evidence>
<evidence type="ECO:0000305" key="6"/>
<evidence type="ECO:0000305" key="7">
    <source>
    </source>
</evidence>
<evidence type="ECO:0000312" key="8">
    <source>
        <dbReference type="EMBL" id="ALF39595.1"/>
    </source>
</evidence>
<evidence type="ECO:0000312" key="9">
    <source>
        <dbReference type="EMBL" id="OTA03187.1"/>
    </source>
</evidence>
<evidence type="ECO:0000312" key="10">
    <source>
        <dbReference type="Proteomes" id="UP000219286"/>
    </source>
</evidence>
<protein>
    <recommendedName>
        <fullName evidence="5">Chorismate mutase</fullName>
        <shortName evidence="6">CM</shortName>
        <ecNumber evidence="7">5.4.99.5</ecNumber>
    </recommendedName>
    <alternativeName>
        <fullName evidence="5">TpARO7</fullName>
    </alternativeName>
</protein>
<proteinExistence type="evidence at protein level"/>
<gene>
    <name evidence="5" type="primary">ARO7</name>
    <name evidence="9" type="ORF">A9Z42_0036180</name>
</gene>
<reference evidence="8" key="1">
    <citation type="journal article" date="2015" name="Front. Microbiol.">
        <title>The importance of chorismate mutase in the biocontrol potential of Trichoderma parareesei.</title>
        <authorList>
            <person name="Perez E."/>
            <person name="Rubio M.B."/>
            <person name="Cardoza R.E."/>
            <person name="Gutierrez S."/>
            <person name="Bettiol W."/>
            <person name="Monte E."/>
            <person name="Hermosa R."/>
        </authorList>
    </citation>
    <scope>NUCLEOTIDE SEQUENCE [GENOMIC DNA]</scope>
    <scope>FUNCTION</scope>
    <scope>CATALYTIC ACTIVITY</scope>
    <scope>PATHWAY</scope>
    <scope>INDUCTION</scope>
    <scope>DISRUPTION PHENOTYPE</scope>
    <source>
        <strain evidence="5">T6</strain>
    </source>
</reference>
<reference evidence="10" key="2">
    <citation type="journal article" date="2015" name="Genome Announc.">
        <title>Genome sequence and annotation of Trichoderma parareesei, the ancestor of the cellulase producer Trichoderma reesei.</title>
        <authorList>
            <person name="Yang D."/>
            <person name="Pomraning K."/>
            <person name="Kopchinskiy A."/>
            <person name="Karimi Aghcheh R."/>
            <person name="Atanasova L."/>
            <person name="Chenthamara K."/>
            <person name="Baker S.E."/>
            <person name="Zhang R."/>
            <person name="Shen Q."/>
            <person name="Freitag M."/>
            <person name="Kubicek C.P."/>
            <person name="Druzhinina I.S."/>
        </authorList>
    </citation>
    <scope>NUCLEOTIDE SEQUENCE [LARGE SCALE GENOMIC DNA]</scope>
    <source>
        <strain evidence="9">CBS 125925</strain>
    </source>
</reference>
<comment type="function">
    <text evidence="1 4">Catalyzes the Claisen rearrangement of chorismate to prephenate (PubMed:26579090). Acts at the first branch point in the aromatic amino acid pathway where it steers biosynthesis towards phenylalanine and tyrosine, and away from tryptophan (By similarity).</text>
</comment>
<comment type="catalytic activity">
    <reaction evidence="7">
        <text>chorismate = prephenate</text>
        <dbReference type="Rhea" id="RHEA:13897"/>
        <dbReference type="ChEBI" id="CHEBI:29748"/>
        <dbReference type="ChEBI" id="CHEBI:29934"/>
        <dbReference type="EC" id="5.4.99.5"/>
    </reaction>
    <physiologicalReaction direction="left-to-right" evidence="7">
        <dbReference type="Rhea" id="RHEA:13898"/>
    </physiologicalReaction>
</comment>
<comment type="activity regulation">
    <text evidence="1">Each dimer has two allosteric binding sites that can bind the regulatory effectors tryptophan or tyrosine (By similarity). Can bind either one tryptophan or one tyrosine, two tryptophan or two tyrosine or one tryptophan and one tyrosine, which differentially affect the catalytic activity (By similarity). Activated by tryptophan and subject to feedback inhibition by tyrosine (By similarity). In the presence of both tryptophan and tyrosine, the enzyme is in the activated state (By similarity).</text>
</comment>
<comment type="pathway">
    <text evidence="7">Metabolic intermediate biosynthesis; prephenate biosynthesis; prephenate from chorismate: step 1/1.</text>
</comment>
<comment type="subunit">
    <text evidence="1">Homodimer.</text>
</comment>
<comment type="subcellular location">
    <subcellularLocation>
        <location evidence="1">Cytoplasm</location>
    </subcellularLocation>
</comment>
<comment type="induction">
    <text evidence="4">Induced by aromatic amino acids and chorismate.</text>
</comment>
<comment type="disruption phenotype">
    <text evidence="3 4">RNAi-mediated knockdown decreases chorismate mutase activity (PubMed:26579090). RNAi-mediated knockdown decreases cell population growth rate (PubMed:26579090). RNAi-mediated knockdown decreases antifungal activity against Fusarium oxysporum and Botrytis cinerea (PubMed:26272569).</text>
</comment>
<keyword id="KW-0021">Allosteric enzyme</keyword>
<keyword id="KW-0028">Amino-acid biosynthesis</keyword>
<keyword id="KW-0057">Aromatic amino acid biosynthesis</keyword>
<keyword id="KW-0963">Cytoplasm</keyword>
<keyword id="KW-0413">Isomerase</keyword>
<keyword id="KW-0584">Phenylalanine biosynthesis</keyword>
<keyword id="KW-0827">Tyrosine biosynthesis</keyword>
<name>CHMU_TRIPA</name>
<organism>
    <name type="scientific">Trichoderma parareesei</name>
    <name type="common">Filamentous fungus</name>
    <dbReference type="NCBI Taxonomy" id="858221"/>
    <lineage>
        <taxon>Eukaryota</taxon>
        <taxon>Fungi</taxon>
        <taxon>Dikarya</taxon>
        <taxon>Ascomycota</taxon>
        <taxon>Pezizomycotina</taxon>
        <taxon>Sordariomycetes</taxon>
        <taxon>Hypocreomycetidae</taxon>
        <taxon>Hypocreales</taxon>
        <taxon>Hypocreaceae</taxon>
        <taxon>Trichoderma</taxon>
    </lineage>
</organism>
<accession>A0A0S0FTT9</accession>
<sequence length="266" mass="30982">MDSAVDMADSERALNLTHIRFQLIRLEDTITFHLIERVQFPYNKTIYTPGAISIPDSKLSFFDWYFFQQEKLQSLIRRFESPDEYPYFPEAVQKPILKPLNYPKILHNNTVCVNDKIKKFYIEKFLPKVCPDFGREDRGEAQENYGSTSTCDIACLQALSRRIHFGKFVAESKFQSDPEYYTKLIQAEDREAIGESITNAAVEKQVLDRLRLKVETYGKDPSLLEGVEQPIKINVDAVVSMYKDFVIPLTKEVEVEYLMQRLIPEE</sequence>